<comment type="function">
    <text>Electron carrier protein. The oxidized form of the cytochrome c heme group can accept an electron from the heme group of the cytochrome c1 subunit of cytochrome reductase. Cytochrome c then transfers this electron to the cytochrome oxidase complex, the final protein carrier in the mitochondrial electron-transport chain.</text>
</comment>
<comment type="subcellular location">
    <subcellularLocation>
        <location>Mitochondrion intermembrane space</location>
    </subcellularLocation>
    <text>Loosely associated with the inner membrane.</text>
</comment>
<comment type="PTM">
    <text>Binds 1 heme c group covalently per subunit.</text>
</comment>
<comment type="similarity">
    <text evidence="4">Belongs to the cytochrome c family.</text>
</comment>
<comment type="online information" name="Protein Spotlight">
    <link uri="https://www.proteinspotlight.org/back_issues/076"/>
    <text>Life shuttle - Issue 76 of November 2006</text>
</comment>
<protein>
    <recommendedName>
        <fullName>Cytochrome c</fullName>
    </recommendedName>
</protein>
<reference key="1">
    <citation type="journal article" date="1971" name="J. Biochem.">
        <title>The amino acid sequence of cytochrome c from bonito (Katsuwonus pelamis, Linnaeus).</title>
        <authorList>
            <person name="Nakayama T."/>
            <person name="Titani K."/>
            <person name="Narita K."/>
        </authorList>
    </citation>
    <scope>PROTEIN SEQUENCE OF 2-104</scope>
    <scope>ACETYLATION AT GLY-2</scope>
</reference>
<reference key="2">
    <citation type="journal article" date="1975" name="J. Biochem.">
        <title>The crystal structure of bonito (katsuo) ferrocytochrome c at 2.3-A resolution. II. Structure and function.</title>
        <authorList>
            <person name="Tanaka N."/>
            <person name="Yamane T."/>
            <person name="Tsukihara T."/>
            <person name="Ashida T."/>
            <person name="Kakudo M."/>
        </authorList>
    </citation>
    <scope>X-RAY CRYSTALLOGRAPHY (2.3 ANGSTROMS) OF REDUCED FORM</scope>
</reference>
<reference key="3">
    <citation type="journal article" date="1979" name="J. Biochem.">
        <title>Structure of bonito heart ferricytochrome c and some remarks on molecular interaction in its crystalline state.</title>
        <authorList>
            <person name="Matsuura Y."/>
            <person name="Hata Y."/>
            <person name="Yamaguchi T."/>
            <person name="Tanaka N."/>
            <person name="Kakudo M."/>
        </authorList>
    </citation>
    <scope>X-RAY CRYSTALLOGRAPHY (2.8 ANGSTROMS) OF OXIDIZED FORM</scope>
</reference>
<accession>P00025</accession>
<evidence type="ECO:0000255" key="1">
    <source>
        <dbReference type="PROSITE-ProRule" id="PRU00433"/>
    </source>
</evidence>
<evidence type="ECO:0000269" key="2">
    <source>
    </source>
</evidence>
<evidence type="ECO:0000269" key="3">
    <source>
    </source>
</evidence>
<evidence type="ECO:0000305" key="4"/>
<evidence type="ECO:0007829" key="5">
    <source>
        <dbReference type="PDB" id="1CYC"/>
    </source>
</evidence>
<sequence>MGDVAKGKKTFVQKCAQCHTVENGGKHKVGPNLWGLFGRKTGQAEGYSYTDANKSKGIVWNENTLMEYLENPKKYIPGTKMIFAGIKKKGERQDLVAYLKSATS</sequence>
<dbReference type="PIR" id="A00022">
    <property type="entry name" value="CCBN"/>
</dbReference>
<dbReference type="PDB" id="1CYC">
    <property type="method" value="X-ray"/>
    <property type="resolution" value="2.30 A"/>
    <property type="chains" value="A/B=2-104"/>
</dbReference>
<dbReference type="PDBsum" id="1CYC"/>
<dbReference type="BMRB" id="P00025"/>
<dbReference type="SMR" id="P00025"/>
<dbReference type="iPTMnet" id="P00025"/>
<dbReference type="EvolutionaryTrace" id="P00025"/>
<dbReference type="GO" id="GO:0005758">
    <property type="term" value="C:mitochondrial intermembrane space"/>
    <property type="evidence" value="ECO:0007669"/>
    <property type="project" value="UniProtKB-SubCell"/>
</dbReference>
<dbReference type="GO" id="GO:0009055">
    <property type="term" value="F:electron transfer activity"/>
    <property type="evidence" value="ECO:0007669"/>
    <property type="project" value="InterPro"/>
</dbReference>
<dbReference type="GO" id="GO:0020037">
    <property type="term" value="F:heme binding"/>
    <property type="evidence" value="ECO:0007669"/>
    <property type="project" value="InterPro"/>
</dbReference>
<dbReference type="GO" id="GO:0046872">
    <property type="term" value="F:metal ion binding"/>
    <property type="evidence" value="ECO:0007669"/>
    <property type="project" value="UniProtKB-KW"/>
</dbReference>
<dbReference type="FunFam" id="1.10.760.10:FF:000001">
    <property type="entry name" value="Cytochrome c iso-1"/>
    <property type="match status" value="1"/>
</dbReference>
<dbReference type="Gene3D" id="1.10.760.10">
    <property type="entry name" value="Cytochrome c-like domain"/>
    <property type="match status" value="1"/>
</dbReference>
<dbReference type="InterPro" id="IPR009056">
    <property type="entry name" value="Cyt_c-like_dom"/>
</dbReference>
<dbReference type="InterPro" id="IPR036909">
    <property type="entry name" value="Cyt_c-like_dom_sf"/>
</dbReference>
<dbReference type="InterPro" id="IPR002327">
    <property type="entry name" value="Cyt_c_1A/1B"/>
</dbReference>
<dbReference type="PANTHER" id="PTHR11961">
    <property type="entry name" value="CYTOCHROME C"/>
    <property type="match status" value="1"/>
</dbReference>
<dbReference type="Pfam" id="PF00034">
    <property type="entry name" value="Cytochrom_C"/>
    <property type="match status" value="1"/>
</dbReference>
<dbReference type="PRINTS" id="PR00604">
    <property type="entry name" value="CYTCHRMECIAB"/>
</dbReference>
<dbReference type="SUPFAM" id="SSF46626">
    <property type="entry name" value="Cytochrome c"/>
    <property type="match status" value="1"/>
</dbReference>
<dbReference type="PROSITE" id="PS51007">
    <property type="entry name" value="CYTC"/>
    <property type="match status" value="1"/>
</dbReference>
<name>CYC_KATPE</name>
<gene>
    <name type="primary">cyc</name>
</gene>
<organism>
    <name type="scientific">Katsuwonus pelamis</name>
    <name type="common">Skipjack tuna</name>
    <name type="synonym">Scomber pelamis</name>
    <dbReference type="NCBI Taxonomy" id="8226"/>
    <lineage>
        <taxon>Eukaryota</taxon>
        <taxon>Metazoa</taxon>
        <taxon>Chordata</taxon>
        <taxon>Craniata</taxon>
        <taxon>Vertebrata</taxon>
        <taxon>Euteleostomi</taxon>
        <taxon>Actinopterygii</taxon>
        <taxon>Neopterygii</taxon>
        <taxon>Teleostei</taxon>
        <taxon>Neoteleostei</taxon>
        <taxon>Acanthomorphata</taxon>
        <taxon>Pelagiaria</taxon>
        <taxon>Scombriformes</taxon>
        <taxon>Scombridae</taxon>
        <taxon>Katsuwonus</taxon>
    </lineage>
</organism>
<proteinExistence type="evidence at protein level"/>
<feature type="initiator methionine" description="Removed" evidence="3">
    <location>
        <position position="1"/>
    </location>
</feature>
<feature type="chain" id="PRO_0000108253" description="Cytochrome c">
    <location>
        <begin position="2"/>
        <end position="104"/>
    </location>
</feature>
<feature type="binding site" description="covalent" evidence="1 2">
    <location>
        <position position="15"/>
    </location>
    <ligand>
        <name>heme c</name>
        <dbReference type="ChEBI" id="CHEBI:61717"/>
    </ligand>
</feature>
<feature type="binding site" description="covalent" evidence="1 2">
    <location>
        <position position="18"/>
    </location>
    <ligand>
        <name>heme c</name>
        <dbReference type="ChEBI" id="CHEBI:61717"/>
    </ligand>
</feature>
<feature type="binding site" description="axial binding residue" evidence="1 2">
    <location>
        <position position="19"/>
    </location>
    <ligand>
        <name>heme c</name>
        <dbReference type="ChEBI" id="CHEBI:61717"/>
    </ligand>
    <ligandPart>
        <name>Fe</name>
        <dbReference type="ChEBI" id="CHEBI:18248"/>
    </ligandPart>
</feature>
<feature type="binding site" description="axial binding residue" evidence="1 2">
    <location>
        <position position="81"/>
    </location>
    <ligand>
        <name>heme c</name>
        <dbReference type="ChEBI" id="CHEBI:61717"/>
    </ligand>
    <ligandPart>
        <name>Fe</name>
        <dbReference type="ChEBI" id="CHEBI:18248"/>
    </ligandPart>
</feature>
<feature type="modified residue" description="N-acetylglycine" evidence="3">
    <location>
        <position position="2"/>
    </location>
</feature>
<feature type="helix" evidence="5">
    <location>
        <begin position="3"/>
        <end position="14"/>
    </location>
</feature>
<feature type="turn" evidence="5">
    <location>
        <begin position="15"/>
        <end position="17"/>
    </location>
</feature>
<feature type="strand" evidence="5">
    <location>
        <begin position="22"/>
        <end position="24"/>
    </location>
</feature>
<feature type="strand" evidence="5">
    <location>
        <begin position="28"/>
        <end position="30"/>
    </location>
</feature>
<feature type="strand" evidence="5">
    <location>
        <begin position="36"/>
        <end position="39"/>
    </location>
</feature>
<feature type="strand" evidence="5">
    <location>
        <begin position="44"/>
        <end position="46"/>
    </location>
</feature>
<feature type="turn" evidence="5">
    <location>
        <begin position="51"/>
        <end position="56"/>
    </location>
</feature>
<feature type="helix" evidence="5">
    <location>
        <begin position="62"/>
        <end position="70"/>
    </location>
</feature>
<feature type="strand" evidence="5">
    <location>
        <begin position="72"/>
        <end position="76"/>
    </location>
</feature>
<feature type="helix" evidence="5">
    <location>
        <begin position="89"/>
        <end position="102"/>
    </location>
</feature>
<keyword id="KW-0002">3D-structure</keyword>
<keyword id="KW-0007">Acetylation</keyword>
<keyword id="KW-0903">Direct protein sequencing</keyword>
<keyword id="KW-0249">Electron transport</keyword>
<keyword id="KW-0349">Heme</keyword>
<keyword id="KW-0408">Iron</keyword>
<keyword id="KW-0479">Metal-binding</keyword>
<keyword id="KW-0496">Mitochondrion</keyword>
<keyword id="KW-0679">Respiratory chain</keyword>
<keyword id="KW-0813">Transport</keyword>